<reference key="1">
    <citation type="journal article" date="2004" name="J. Cell Sci.">
        <title>Fad24, a mammalian homolog of Noc3p, is a positive regulator in adipocyte differentiation.</title>
        <authorList>
            <person name="Tominaga K."/>
            <person name="Johmura Y."/>
            <person name="Nishizuka M."/>
            <person name="Imagawa M."/>
        </authorList>
    </citation>
    <scope>NUCLEOTIDE SEQUENCE [MRNA]</scope>
    <scope>FUNCTION</scope>
    <scope>SUBCELLULAR LOCATION</scope>
    <scope>INDUCTION</scope>
</reference>
<reference key="2">
    <citation type="journal article" date="2009" name="PLoS Biol.">
        <title>Lineage-specific biology revealed by a finished genome assembly of the mouse.</title>
        <authorList>
            <person name="Church D.M."/>
            <person name="Goodstadt L."/>
            <person name="Hillier L.W."/>
            <person name="Zody M.C."/>
            <person name="Goldstein S."/>
            <person name="She X."/>
            <person name="Bult C.J."/>
            <person name="Agarwala R."/>
            <person name="Cherry J.L."/>
            <person name="DiCuccio M."/>
            <person name="Hlavina W."/>
            <person name="Kapustin Y."/>
            <person name="Meric P."/>
            <person name="Maglott D."/>
            <person name="Birtle Z."/>
            <person name="Marques A.C."/>
            <person name="Graves T."/>
            <person name="Zhou S."/>
            <person name="Teague B."/>
            <person name="Potamousis K."/>
            <person name="Churas C."/>
            <person name="Place M."/>
            <person name="Herschleb J."/>
            <person name="Runnheim R."/>
            <person name="Forrest D."/>
            <person name="Amos-Landgraf J."/>
            <person name="Schwartz D.C."/>
            <person name="Cheng Z."/>
            <person name="Lindblad-Toh K."/>
            <person name="Eichler E.E."/>
            <person name="Ponting C.P."/>
        </authorList>
    </citation>
    <scope>NUCLEOTIDE SEQUENCE [LARGE SCALE GENOMIC DNA]</scope>
    <source>
        <strain>C57BL/6J</strain>
    </source>
</reference>
<reference key="3">
    <citation type="journal article" date="2004" name="Genome Res.">
        <title>The status, quality, and expansion of the NIH full-length cDNA project: the Mammalian Gene Collection (MGC).</title>
        <authorList>
            <consortium name="The MGC Project Team"/>
        </authorList>
    </citation>
    <scope>NUCLEOTIDE SEQUENCE [LARGE SCALE MRNA]</scope>
    <source>
        <strain>FVB/N</strain>
        <tissue>Mammary tumor</tissue>
    </source>
</reference>
<reference key="4">
    <citation type="journal article" date="2001" name="Dev. Dyn.">
        <title>A novel transgenic marker for migrating limb muscle precursors and for vascular smooth muscle cells.</title>
        <authorList>
            <person name="Tidhar A."/>
            <person name="Reichenstein M."/>
            <person name="Cohen D."/>
            <person name="Faerman A."/>
            <person name="Copeland N.G."/>
            <person name="Gilbert D.J."/>
            <person name="Jenkins N.A."/>
            <person name="Shani M."/>
        </authorList>
    </citation>
    <scope>NUCLEOTIDE SEQUENCE [MRNA] OF 468-807</scope>
</reference>
<accession>Q8VI84</accession>
<accession>E9QQ46</accession>
<accession>Q9JKM3</accession>
<evidence type="ECO:0000250" key="1">
    <source>
        <dbReference type="UniProtKB" id="Q8WTT2"/>
    </source>
</evidence>
<evidence type="ECO:0000255" key="2"/>
<evidence type="ECO:0000256" key="3">
    <source>
        <dbReference type="SAM" id="MobiDB-lite"/>
    </source>
</evidence>
<evidence type="ECO:0000269" key="4">
    <source>
    </source>
</evidence>
<evidence type="ECO:0000305" key="5"/>
<feature type="chain" id="PRO_0000173475" description="Nucleolar complex protein 3 homolog">
    <location>
        <begin position="1"/>
        <end position="807"/>
    </location>
</feature>
<feature type="region of interest" description="Disordered" evidence="3">
    <location>
        <begin position="27"/>
        <end position="93"/>
    </location>
</feature>
<feature type="region of interest" description="Disordered" evidence="3">
    <location>
        <begin position="167"/>
        <end position="191"/>
    </location>
</feature>
<feature type="coiled-coil region" evidence="2">
    <location>
        <begin position="449"/>
        <end position="489"/>
    </location>
</feature>
<feature type="compositionally biased region" description="Basic residues" evidence="3">
    <location>
        <begin position="40"/>
        <end position="51"/>
    </location>
</feature>
<feature type="compositionally biased region" description="Basic and acidic residues" evidence="3">
    <location>
        <begin position="52"/>
        <end position="78"/>
    </location>
</feature>
<feature type="compositionally biased region" description="Acidic residues" evidence="3">
    <location>
        <begin position="79"/>
        <end position="93"/>
    </location>
</feature>
<feature type="compositionally biased region" description="Acidic residues" evidence="3">
    <location>
        <begin position="174"/>
        <end position="190"/>
    </location>
</feature>
<feature type="cross-link" description="Glycyl lysine isopeptide (Lys-Gly) (interchain with G-Cter in SUMO2)" evidence="1">
    <location>
        <position position="332"/>
    </location>
</feature>
<feature type="sequence conflict" description="In Ref. 1; BAB84193 and 3; AAH31132." evidence="5" ref="1 3">
    <original>V</original>
    <variation>L</variation>
    <location>
        <position position="173"/>
    </location>
</feature>
<feature type="sequence conflict" description="In Ref. 4; AAF40207." evidence="5" ref="4">
    <original>T</original>
    <variation>S</variation>
    <location>
        <position position="744"/>
    </location>
</feature>
<feature type="sequence conflict" description="In Ref. 4; AAF40207." evidence="5" ref="4">
    <original>S</original>
    <variation>C</variation>
    <location>
        <position position="751"/>
    </location>
</feature>
<comment type="function">
    <text evidence="4">May be required for adipogenesis.</text>
</comment>
<comment type="subcellular location">
    <subcellularLocation>
        <location evidence="4">Nucleus</location>
        <location evidence="4">Nucleolus</location>
    </subcellularLocation>
    <subcellularLocation>
        <location evidence="4">Nucleus speckle</location>
    </subcellularLocation>
</comment>
<comment type="induction">
    <text evidence="4">Induced between 1 and 12 hours following adipogenic stimulus.</text>
</comment>
<comment type="similarity">
    <text evidence="5">Belongs to the CBF/MAK21 family.</text>
</comment>
<sequence length="807" mass="93211">MKARRNKKQVPSFRKLIKTSKVKLENKLKNKQFKQQSTIKKYRKEQRKLRQAVKDAVSKKPIPLEDPKSKRPVKRMEREEDEEEEALPLDMMDEDDLQLMKDLGQKASFLTRDLSSSEPVHIKKRKHESVIEKYEKVPRTLQTAPEKELIHLLPIKDKSGIIPQAREKPVTDVQQEEEAEEELEDEEEVIEDPRKELTIEEHVIERKKKLQDKKIQIAALASAILSDPESHIKKLKELRSMLMEQDPDVAVTVRKLVIISLMELFKDITPSYKIRPLTEAEKSTKIRKETQKLREFEEGLVSQYKFYLENLEQIVKDWKQRKLKKSNVVSLKAYKGLAEVAVKSLCELLVALPHFNFHNNIIVLIVPLMNDGSKPVSEMCCEAVKKLFKQDKLGQASLGVIKVISGFVKGRNYEVRPEMLKTFLCLRIKEVEVKKDTEDINKPKRFMTFKEKRKTLSRMQRKWKKAEEKLERELREAEASESTEKKLKLHTETLNIVFVTYFRILKKAQKSPLLPAVLEGLAKFAHLINVEFFDDLLVVLHTLIESGELSYQESLHCVQTAFHILSGQGDVLNIDPMKFYTHLYKTLFTLHAGATNDGIEIVLHCLDVMLSKRRKQVSHQRALAFIKRLCTLALQVLPNSSIGLLATTRILMHTFPRTDLLLDNESQGSGVFLPELEEPEYCNAQNTALWELHTLRRHYHPIVRRFAAHLLAGAPSEGSEALKPELSRRSAVELFETYSMAAMTFNPPVESSHSKRKDKFLPGDSFLNEDLNQLIKRYCNEAAPETPLDFAKCLESSSRQYRVNGLS</sequence>
<name>NOC3L_MOUSE</name>
<dbReference type="EMBL" id="AB077991">
    <property type="protein sequence ID" value="BAB84193.1"/>
    <property type="molecule type" value="mRNA"/>
</dbReference>
<dbReference type="EMBL" id="AC101775">
    <property type="status" value="NOT_ANNOTATED_CDS"/>
    <property type="molecule type" value="Genomic_DNA"/>
</dbReference>
<dbReference type="EMBL" id="AC111023">
    <property type="status" value="NOT_ANNOTATED_CDS"/>
    <property type="molecule type" value="Genomic_DNA"/>
</dbReference>
<dbReference type="EMBL" id="AC158131">
    <property type="status" value="NOT_ANNOTATED_CDS"/>
    <property type="molecule type" value="Genomic_DNA"/>
</dbReference>
<dbReference type="EMBL" id="BC031132">
    <property type="protein sequence ID" value="AAH31132.1"/>
    <property type="molecule type" value="mRNA"/>
</dbReference>
<dbReference type="EMBL" id="AF233884">
    <property type="protein sequence ID" value="AAF40207.1"/>
    <property type="molecule type" value="mRNA"/>
</dbReference>
<dbReference type="CCDS" id="CCDS37974.1"/>
<dbReference type="RefSeq" id="NP_067290.2">
    <property type="nucleotide sequence ID" value="NM_021315.2"/>
</dbReference>
<dbReference type="SMR" id="Q8VI84"/>
<dbReference type="BioGRID" id="208315">
    <property type="interactions" value="31"/>
</dbReference>
<dbReference type="FunCoup" id="Q8VI84">
    <property type="interactions" value="4180"/>
</dbReference>
<dbReference type="IntAct" id="Q8VI84">
    <property type="interactions" value="2"/>
</dbReference>
<dbReference type="MINT" id="Q8VI84"/>
<dbReference type="STRING" id="10090.ENSMUSP00000025963"/>
<dbReference type="iPTMnet" id="Q8VI84"/>
<dbReference type="PhosphoSitePlus" id="Q8VI84"/>
<dbReference type="PaxDb" id="10090-ENSMUSP00000025963"/>
<dbReference type="PeptideAtlas" id="Q8VI84"/>
<dbReference type="ProteomicsDB" id="293867"/>
<dbReference type="Pumba" id="Q8VI84"/>
<dbReference type="Antibodypedia" id="30528">
    <property type="antibodies" value="193 antibodies from 29 providers"/>
</dbReference>
<dbReference type="DNASU" id="57753"/>
<dbReference type="Ensembl" id="ENSMUST00000025963.8">
    <property type="protein sequence ID" value="ENSMUSP00000025963.8"/>
    <property type="gene ID" value="ENSMUSG00000024999.8"/>
</dbReference>
<dbReference type="GeneID" id="57753"/>
<dbReference type="KEGG" id="mmu:57753"/>
<dbReference type="UCSC" id="uc008hjr.2">
    <property type="organism name" value="mouse"/>
</dbReference>
<dbReference type="AGR" id="MGI:1932610"/>
<dbReference type="CTD" id="64318"/>
<dbReference type="MGI" id="MGI:1932610">
    <property type="gene designation" value="Noc3l"/>
</dbReference>
<dbReference type="VEuPathDB" id="HostDB:ENSMUSG00000024999"/>
<dbReference type="eggNOG" id="KOG2153">
    <property type="taxonomic scope" value="Eukaryota"/>
</dbReference>
<dbReference type="GeneTree" id="ENSGT00390000008540"/>
<dbReference type="HOGENOM" id="CLU_012441_2_1_1"/>
<dbReference type="InParanoid" id="Q8VI84"/>
<dbReference type="OMA" id="HYCPQVR"/>
<dbReference type="OrthoDB" id="10263597at2759"/>
<dbReference type="PhylomeDB" id="Q8VI84"/>
<dbReference type="TreeFam" id="TF318817"/>
<dbReference type="BioGRID-ORCS" id="57753">
    <property type="hits" value="24 hits in 79 CRISPR screens"/>
</dbReference>
<dbReference type="ChiTaRS" id="Noc3l">
    <property type="organism name" value="mouse"/>
</dbReference>
<dbReference type="PRO" id="PR:Q8VI84"/>
<dbReference type="Proteomes" id="UP000000589">
    <property type="component" value="Chromosome 19"/>
</dbReference>
<dbReference type="RNAct" id="Q8VI84">
    <property type="molecule type" value="protein"/>
</dbReference>
<dbReference type="Bgee" id="ENSMUSG00000024999">
    <property type="expression patterns" value="Expressed in humerus cartilage element and 245 other cell types or tissues"/>
</dbReference>
<dbReference type="GO" id="GO:0005739">
    <property type="term" value="C:mitochondrion"/>
    <property type="evidence" value="ECO:0007669"/>
    <property type="project" value="Ensembl"/>
</dbReference>
<dbReference type="GO" id="GO:0016607">
    <property type="term" value="C:nuclear speck"/>
    <property type="evidence" value="ECO:0000314"/>
    <property type="project" value="MGI"/>
</dbReference>
<dbReference type="GO" id="GO:0005730">
    <property type="term" value="C:nucleolus"/>
    <property type="evidence" value="ECO:0000314"/>
    <property type="project" value="MGI"/>
</dbReference>
<dbReference type="GO" id="GO:0045444">
    <property type="term" value="P:fat cell differentiation"/>
    <property type="evidence" value="ECO:0000315"/>
    <property type="project" value="MGI"/>
</dbReference>
<dbReference type="InterPro" id="IPR016024">
    <property type="entry name" value="ARM-type_fold"/>
</dbReference>
<dbReference type="InterPro" id="IPR005612">
    <property type="entry name" value="CCAAT-binding_factor"/>
</dbReference>
<dbReference type="InterPro" id="IPR011501">
    <property type="entry name" value="Noc3_N"/>
</dbReference>
<dbReference type="InterPro" id="IPR016903">
    <property type="entry name" value="Nucleolar_cplx-assoc_3"/>
</dbReference>
<dbReference type="PANTHER" id="PTHR14428">
    <property type="entry name" value="NUCLEOLAR COMPLEX PROTEIN 3"/>
    <property type="match status" value="1"/>
</dbReference>
<dbReference type="PANTHER" id="PTHR14428:SF5">
    <property type="entry name" value="NUCLEOLAR COMPLEX PROTEIN 3 HOMOLOG"/>
    <property type="match status" value="1"/>
</dbReference>
<dbReference type="Pfam" id="PF03914">
    <property type="entry name" value="CBF"/>
    <property type="match status" value="1"/>
</dbReference>
<dbReference type="Pfam" id="PF07540">
    <property type="entry name" value="NOC3p"/>
    <property type="match status" value="1"/>
</dbReference>
<dbReference type="PIRSF" id="PIRSF028977">
    <property type="entry name" value="Nucleolar_complex_p3"/>
    <property type="match status" value="1"/>
</dbReference>
<dbReference type="SUPFAM" id="SSF48371">
    <property type="entry name" value="ARM repeat"/>
    <property type="match status" value="1"/>
</dbReference>
<keyword id="KW-0175">Coiled coil</keyword>
<keyword id="KW-1017">Isopeptide bond</keyword>
<keyword id="KW-0539">Nucleus</keyword>
<keyword id="KW-1185">Reference proteome</keyword>
<keyword id="KW-0832">Ubl conjugation</keyword>
<protein>
    <recommendedName>
        <fullName>Nucleolar complex protein 3 homolog</fullName>
        <shortName>NOC3 protein homolog</shortName>
    </recommendedName>
    <alternativeName>
        <fullName>Factor for adipocyte differentiation 24</fullName>
    </alternativeName>
    <alternativeName>
        <fullName>NOC3-like protein</fullName>
    </alternativeName>
    <alternativeName>
        <fullName>Nucleolar complex-associated protein 3-like protein</fullName>
    </alternativeName>
</protein>
<proteinExistence type="evidence at transcript level"/>
<gene>
    <name type="primary">Noc3l</name>
    <name type="synonym">Ad24</name>
    <name type="synonym">Fad24</name>
</gene>
<organism>
    <name type="scientific">Mus musculus</name>
    <name type="common">Mouse</name>
    <dbReference type="NCBI Taxonomy" id="10090"/>
    <lineage>
        <taxon>Eukaryota</taxon>
        <taxon>Metazoa</taxon>
        <taxon>Chordata</taxon>
        <taxon>Craniata</taxon>
        <taxon>Vertebrata</taxon>
        <taxon>Euteleostomi</taxon>
        <taxon>Mammalia</taxon>
        <taxon>Eutheria</taxon>
        <taxon>Euarchontoglires</taxon>
        <taxon>Glires</taxon>
        <taxon>Rodentia</taxon>
        <taxon>Myomorpha</taxon>
        <taxon>Muroidea</taxon>
        <taxon>Muridae</taxon>
        <taxon>Murinae</taxon>
        <taxon>Mus</taxon>
        <taxon>Mus</taxon>
    </lineage>
</organism>